<dbReference type="EMBL" id="U41267">
    <property type="protein sequence ID" value="AAC44152.1"/>
    <property type="molecule type" value="Genomic_DNA"/>
</dbReference>
<dbReference type="EMBL" id="AE004091">
    <property type="protein sequence ID" value="AAG07196.1"/>
    <property type="molecule type" value="Genomic_DNA"/>
</dbReference>
<dbReference type="PIR" id="B83168">
    <property type="entry name" value="B83168"/>
</dbReference>
<dbReference type="PIR" id="S77591">
    <property type="entry name" value="S77591"/>
</dbReference>
<dbReference type="RefSeq" id="WP_003092818.1">
    <property type="nucleotide sequence ID" value="NZ_QZGE01000001.1"/>
</dbReference>
<dbReference type="SMR" id="Q51383"/>
<dbReference type="FunCoup" id="Q51383">
    <property type="interactions" value="395"/>
</dbReference>
<dbReference type="STRING" id="208964.PA3809"/>
<dbReference type="PaxDb" id="208964-PA3809"/>
<dbReference type="DNASU" id="879944"/>
<dbReference type="KEGG" id="pae:PA3809"/>
<dbReference type="PATRIC" id="fig|208964.12.peg.3988"/>
<dbReference type="PseudoCAP" id="PA3809"/>
<dbReference type="HOGENOM" id="CLU_082632_5_2_6"/>
<dbReference type="InParanoid" id="Q51383"/>
<dbReference type="OrthoDB" id="9793027at2"/>
<dbReference type="PhylomeDB" id="Q51383"/>
<dbReference type="BioCyc" id="PAER208964:G1FZ6-3880-MONOMER"/>
<dbReference type="Proteomes" id="UP000002438">
    <property type="component" value="Chromosome"/>
</dbReference>
<dbReference type="GO" id="GO:0005829">
    <property type="term" value="C:cytosol"/>
    <property type="evidence" value="ECO:0000318"/>
    <property type="project" value="GO_Central"/>
</dbReference>
<dbReference type="GO" id="GO:0051537">
    <property type="term" value="F:2 iron, 2 sulfur cluster binding"/>
    <property type="evidence" value="ECO:0007669"/>
    <property type="project" value="UniProtKB-KW"/>
</dbReference>
<dbReference type="GO" id="GO:0009055">
    <property type="term" value="F:electron transfer activity"/>
    <property type="evidence" value="ECO:0000318"/>
    <property type="project" value="GO_Central"/>
</dbReference>
<dbReference type="GO" id="GO:0046872">
    <property type="term" value="F:metal ion binding"/>
    <property type="evidence" value="ECO:0007669"/>
    <property type="project" value="UniProtKB-KW"/>
</dbReference>
<dbReference type="GO" id="GO:0022900">
    <property type="term" value="P:electron transport chain"/>
    <property type="evidence" value="ECO:0000318"/>
    <property type="project" value="GO_Central"/>
</dbReference>
<dbReference type="GO" id="GO:0140647">
    <property type="term" value="P:P450-containing electron transport chain"/>
    <property type="evidence" value="ECO:0007669"/>
    <property type="project" value="InterPro"/>
</dbReference>
<dbReference type="CDD" id="cd00207">
    <property type="entry name" value="fer2"/>
    <property type="match status" value="1"/>
</dbReference>
<dbReference type="Gene3D" id="3.10.20.30">
    <property type="match status" value="1"/>
</dbReference>
<dbReference type="InterPro" id="IPR036010">
    <property type="entry name" value="2Fe-2S_ferredoxin-like_sf"/>
</dbReference>
<dbReference type="InterPro" id="IPR001041">
    <property type="entry name" value="2Fe-2S_ferredoxin-type"/>
</dbReference>
<dbReference type="InterPro" id="IPR001055">
    <property type="entry name" value="Adrenodoxin-like"/>
</dbReference>
<dbReference type="InterPro" id="IPR018298">
    <property type="entry name" value="Adrenodoxin_Fe-S_BS"/>
</dbReference>
<dbReference type="InterPro" id="IPR012675">
    <property type="entry name" value="Beta-grasp_dom_sf"/>
</dbReference>
<dbReference type="InterPro" id="IPR011536">
    <property type="entry name" value="Fdx_isc"/>
</dbReference>
<dbReference type="NCBIfam" id="TIGR02007">
    <property type="entry name" value="fdx_isc"/>
    <property type="match status" value="1"/>
</dbReference>
<dbReference type="PANTHER" id="PTHR23426:SF65">
    <property type="entry name" value="FERREDOXIN-2, MITOCHONDRIAL"/>
    <property type="match status" value="1"/>
</dbReference>
<dbReference type="PANTHER" id="PTHR23426">
    <property type="entry name" value="FERREDOXIN/ADRENODOXIN"/>
    <property type="match status" value="1"/>
</dbReference>
<dbReference type="Pfam" id="PF00111">
    <property type="entry name" value="Fer2"/>
    <property type="match status" value="1"/>
</dbReference>
<dbReference type="PRINTS" id="PR00355">
    <property type="entry name" value="ADRENODOXIN"/>
</dbReference>
<dbReference type="SUPFAM" id="SSF54292">
    <property type="entry name" value="2Fe-2S ferredoxin-like"/>
    <property type="match status" value="1"/>
</dbReference>
<dbReference type="PROSITE" id="PS51085">
    <property type="entry name" value="2FE2S_FER_2"/>
    <property type="match status" value="1"/>
</dbReference>
<dbReference type="PROSITE" id="PS00814">
    <property type="entry name" value="ADX"/>
    <property type="match status" value="1"/>
</dbReference>
<reference key="1">
    <citation type="journal article" date="1996" name="Mol. Microbiol.">
        <title>Nucleoside diphosphate kinase from Pseudomonas aeruginosa: characterization of the gene and its role in cellular growth and exopolysaccharide alginate synthesis.</title>
        <authorList>
            <person name="Sundin G.W."/>
            <person name="Shankar S."/>
            <person name="Chugani S.A."/>
            <person name="Chopade B."/>
            <person name="Kavanaugh-Black A."/>
            <person name="Chakrabarty A.M."/>
        </authorList>
    </citation>
    <scope>NUCLEOTIDE SEQUENCE [GENOMIC DNA]</scope>
    <source>
        <strain>8822</strain>
    </source>
</reference>
<reference key="2">
    <citation type="journal article" date="2000" name="Nature">
        <title>Complete genome sequence of Pseudomonas aeruginosa PAO1, an opportunistic pathogen.</title>
        <authorList>
            <person name="Stover C.K."/>
            <person name="Pham X.-Q.T."/>
            <person name="Erwin A.L."/>
            <person name="Mizoguchi S.D."/>
            <person name="Warrener P."/>
            <person name="Hickey M.J."/>
            <person name="Brinkman F.S.L."/>
            <person name="Hufnagle W.O."/>
            <person name="Kowalik D.J."/>
            <person name="Lagrou M."/>
            <person name="Garber R.L."/>
            <person name="Goltry L."/>
            <person name="Tolentino E."/>
            <person name="Westbrock-Wadman S."/>
            <person name="Yuan Y."/>
            <person name="Brody L.L."/>
            <person name="Coulter S.N."/>
            <person name="Folger K.R."/>
            <person name="Kas A."/>
            <person name="Larbig K."/>
            <person name="Lim R.M."/>
            <person name="Smith K.A."/>
            <person name="Spencer D.H."/>
            <person name="Wong G.K.-S."/>
            <person name="Wu Z."/>
            <person name="Paulsen I.T."/>
            <person name="Reizer J."/>
            <person name="Saier M.H. Jr."/>
            <person name="Hancock R.E.W."/>
            <person name="Lory S."/>
            <person name="Olson M.V."/>
        </authorList>
    </citation>
    <scope>NUCLEOTIDE SEQUENCE [LARGE SCALE GENOMIC DNA]</scope>
    <source>
        <strain>ATCC 15692 / DSM 22644 / CIP 104116 / JCM 14847 / LMG 12228 / 1C / PRS 101 / PAO1</strain>
    </source>
</reference>
<protein>
    <recommendedName>
        <fullName>2Fe-2S ferredoxin</fullName>
    </recommendedName>
</protein>
<evidence type="ECO:0000250" key="1"/>
<evidence type="ECO:0000255" key="2">
    <source>
        <dbReference type="PROSITE-ProRule" id="PRU00465"/>
    </source>
</evidence>
<evidence type="ECO:0000305" key="3"/>
<keyword id="KW-0001">2Fe-2S</keyword>
<keyword id="KW-0249">Electron transport</keyword>
<keyword id="KW-0408">Iron</keyword>
<keyword id="KW-0411">Iron-sulfur</keyword>
<keyword id="KW-0479">Metal-binding</keyword>
<keyword id="KW-1185">Reference proteome</keyword>
<keyword id="KW-0813">Transport</keyword>
<sequence>MPQIVILPHADHCPEGAVFEAKPGETILDAALRNGIEIEHACEKSCACTTCHVIVREGLDSMEPSDELEDDMLDKAWGLEPDSRLSCQAVVADEDLVVEIPKYTINQVSEGH</sequence>
<comment type="function">
    <text>Ferredoxin are iron-sulfur proteins that transfer electrons in a wide variety of metabolic reactions.</text>
</comment>
<comment type="cofactor">
    <cofactor evidence="1">
        <name>[2Fe-2S] cluster</name>
        <dbReference type="ChEBI" id="CHEBI:190135"/>
    </cofactor>
    <text evidence="1">Binds 1 [2Fe-2S] cluster.</text>
</comment>
<comment type="similarity">
    <text evidence="3">Belongs to the adrenodoxin/putidaredoxin family.</text>
</comment>
<accession>Q51383</accession>
<gene>
    <name type="primary">fdx</name>
    <name type="ordered locus">PA3809</name>
</gene>
<organism>
    <name type="scientific">Pseudomonas aeruginosa (strain ATCC 15692 / DSM 22644 / CIP 104116 / JCM 14847 / LMG 12228 / 1C / PRS 101 / PAO1)</name>
    <dbReference type="NCBI Taxonomy" id="208964"/>
    <lineage>
        <taxon>Bacteria</taxon>
        <taxon>Pseudomonadati</taxon>
        <taxon>Pseudomonadota</taxon>
        <taxon>Gammaproteobacteria</taxon>
        <taxon>Pseudomonadales</taxon>
        <taxon>Pseudomonadaceae</taxon>
        <taxon>Pseudomonas</taxon>
    </lineage>
</organism>
<name>FER_PSEAE</name>
<proteinExistence type="inferred from homology"/>
<feature type="chain" id="PRO_0000201172" description="2Fe-2S ferredoxin">
    <location>
        <begin position="1"/>
        <end position="112"/>
    </location>
</feature>
<feature type="domain" description="2Fe-2S ferredoxin-type" evidence="2">
    <location>
        <begin position="1"/>
        <end position="104"/>
    </location>
</feature>
<feature type="binding site" evidence="2">
    <location>
        <position position="42"/>
    </location>
    <ligand>
        <name>[2Fe-2S] cluster</name>
        <dbReference type="ChEBI" id="CHEBI:190135"/>
    </ligand>
</feature>
<feature type="binding site" evidence="2">
    <location>
        <position position="48"/>
    </location>
    <ligand>
        <name>[2Fe-2S] cluster</name>
        <dbReference type="ChEBI" id="CHEBI:190135"/>
    </ligand>
</feature>
<feature type="binding site" evidence="2">
    <location>
        <position position="51"/>
    </location>
    <ligand>
        <name>[2Fe-2S] cluster</name>
        <dbReference type="ChEBI" id="CHEBI:190135"/>
    </ligand>
</feature>
<feature type="binding site" evidence="2">
    <location>
        <position position="87"/>
    </location>
    <ligand>
        <name>[2Fe-2S] cluster</name>
        <dbReference type="ChEBI" id="CHEBI:190135"/>
    </ligand>
</feature>
<feature type="sequence conflict" description="In Ref. 1; AAC44152." evidence="3" ref="1">
    <original>A</original>
    <variation>AHA</variation>
    <location>
        <position position="41"/>
    </location>
</feature>